<feature type="chain" id="PRO_0000312781" description="Putative nucleotidyltransferase MAB21L1">
    <location>
        <begin position="1"/>
        <end position="359"/>
    </location>
</feature>
<feature type="binding site" evidence="5 16">
    <location>
        <begin position="23"/>
        <end position="24"/>
    </location>
    <ligand>
        <name>a ribonucleoside 5'-triphosphate</name>
        <dbReference type="ChEBI" id="CHEBI:61557"/>
    </ligand>
</feature>
<feature type="binding site" evidence="5 16">
    <location>
        <begin position="63"/>
        <end position="66"/>
    </location>
    <ligand>
        <name>a ribonucleoside 5'-triphosphate</name>
        <dbReference type="ChEBI" id="CHEBI:61557"/>
    </ligand>
</feature>
<feature type="binding site" evidence="2">
    <location>
        <position position="73"/>
    </location>
    <ligand>
        <name>Mg(2+)</name>
        <dbReference type="ChEBI" id="CHEBI:18420"/>
        <note>catalytic</note>
    </ligand>
</feature>
<feature type="binding site" evidence="2">
    <location>
        <position position="75"/>
    </location>
    <ligand>
        <name>Mg(2+)</name>
        <dbReference type="ChEBI" id="CHEBI:18420"/>
        <note>catalytic</note>
    </ligand>
</feature>
<feature type="binding site" evidence="5 16">
    <location>
        <position position="248"/>
    </location>
    <ligand>
        <name>a ribonucleoside 5'-triphosphate</name>
        <dbReference type="ChEBI" id="CHEBI:61557"/>
    </ligand>
</feature>
<feature type="binding site" evidence="5 16">
    <location>
        <begin position="252"/>
        <end position="255"/>
    </location>
    <ligand>
        <name>a ribonucleoside 5'-triphosphate</name>
        <dbReference type="ChEBI" id="CHEBI:61557"/>
    </ligand>
</feature>
<feature type="sequence variant" id="VAR_037568" description="In dbSNP:rs1065316.">
    <original>S</original>
    <variation>P</variation>
    <location>
        <position position="70"/>
    </location>
</feature>
<feature type="sequence variant" id="VAR_082959" description="In COFG; uncertain significance; dbSNP:rs1566189161." evidence="6">
    <original>Q</original>
    <variation>P</variation>
    <location>
        <position position="233"/>
    </location>
</feature>
<feature type="sequence variant" id="VAR_082960" description="In COFG." evidence="6">
    <location>
        <begin position="280"/>
        <end position="359"/>
    </location>
</feature>
<feature type="mutagenesis site" description="Decreased protein stability." evidence="5">
    <original>R</original>
    <variation>C</variation>
    <location>
        <position position="51"/>
    </location>
</feature>
<feature type="mutagenesis site" description="Decreased protein stability." evidence="5">
    <original>R</original>
    <variation>Q</variation>
    <location>
        <position position="247"/>
    </location>
</feature>
<feature type="sequence conflict" description="In Ref. 3; CAG33701." evidence="12" ref="3">
    <original>F</original>
    <variation>L</variation>
    <location>
        <position position="132"/>
    </location>
</feature>
<feature type="helix" evidence="17">
    <location>
        <begin position="2"/>
        <end position="48"/>
    </location>
</feature>
<feature type="strand" evidence="17">
    <location>
        <begin position="66"/>
        <end position="70"/>
    </location>
</feature>
<feature type="strand" evidence="17">
    <location>
        <begin position="73"/>
        <end position="79"/>
    </location>
</feature>
<feature type="strand" evidence="17">
    <location>
        <begin position="86"/>
        <end position="89"/>
    </location>
</feature>
<feature type="strand" evidence="17">
    <location>
        <begin position="97"/>
        <end position="106"/>
    </location>
</feature>
<feature type="turn" evidence="17">
    <location>
        <begin position="108"/>
        <end position="110"/>
    </location>
</feature>
<feature type="helix" evidence="17">
    <location>
        <begin position="114"/>
        <end position="116"/>
    </location>
</feature>
<feature type="strand" evidence="17">
    <location>
        <begin position="121"/>
        <end position="123"/>
    </location>
</feature>
<feature type="helix" evidence="17">
    <location>
        <begin position="125"/>
        <end position="142"/>
    </location>
</feature>
<feature type="helix" evidence="17">
    <location>
        <begin position="146"/>
        <end position="148"/>
    </location>
</feature>
<feature type="strand" evidence="17">
    <location>
        <begin position="149"/>
        <end position="151"/>
    </location>
</feature>
<feature type="strand" evidence="17">
    <location>
        <begin position="159"/>
        <end position="162"/>
    </location>
</feature>
<feature type="turn" evidence="17">
    <location>
        <begin position="163"/>
        <end position="165"/>
    </location>
</feature>
<feature type="strand" evidence="17">
    <location>
        <begin position="166"/>
        <end position="176"/>
    </location>
</feature>
<feature type="helix" evidence="17">
    <location>
        <begin position="182"/>
        <end position="184"/>
    </location>
</feature>
<feature type="helix" evidence="17">
    <location>
        <begin position="197"/>
        <end position="205"/>
    </location>
</feature>
<feature type="strand" evidence="17">
    <location>
        <begin position="208"/>
        <end position="211"/>
    </location>
</feature>
<feature type="strand" evidence="17">
    <location>
        <begin position="230"/>
        <end position="233"/>
    </location>
</feature>
<feature type="helix" evidence="17">
    <location>
        <begin position="235"/>
        <end position="241"/>
    </location>
</feature>
<feature type="helix" evidence="17">
    <location>
        <begin position="247"/>
        <end position="261"/>
    </location>
</feature>
<feature type="helix" evidence="17">
    <location>
        <begin position="271"/>
        <end position="284"/>
    </location>
</feature>
<feature type="helix" evidence="17">
    <location>
        <begin position="288"/>
        <end position="291"/>
    </location>
</feature>
<feature type="helix" evidence="17">
    <location>
        <begin position="293"/>
        <end position="295"/>
    </location>
</feature>
<feature type="helix" evidence="17">
    <location>
        <begin position="296"/>
        <end position="312"/>
    </location>
</feature>
<feature type="turn" evidence="17">
    <location>
        <begin position="326"/>
        <end position="329"/>
    </location>
</feature>
<feature type="helix" evidence="17">
    <location>
        <begin position="332"/>
        <end position="351"/>
    </location>
</feature>
<feature type="helix" evidence="17">
    <location>
        <begin position="353"/>
        <end position="358"/>
    </location>
</feature>
<proteinExistence type="evidence at protein level"/>
<dbReference type="EC" id="2.7.7.-" evidence="12"/>
<dbReference type="EMBL" id="U38810">
    <property type="protein sequence ID" value="AAB47576.1"/>
    <property type="molecule type" value="mRNA"/>
</dbReference>
<dbReference type="EMBL" id="AB073388">
    <property type="protein sequence ID" value="BAE45718.1"/>
    <property type="molecule type" value="mRNA"/>
</dbReference>
<dbReference type="EMBL" id="CR457420">
    <property type="protein sequence ID" value="CAG33701.1"/>
    <property type="molecule type" value="mRNA"/>
</dbReference>
<dbReference type="EMBL" id="AL390071">
    <property type="status" value="NOT_ANNOTATED_CDS"/>
    <property type="molecule type" value="Genomic_DNA"/>
</dbReference>
<dbReference type="EMBL" id="CH471075">
    <property type="protein sequence ID" value="EAX08547.1"/>
    <property type="molecule type" value="Genomic_DNA"/>
</dbReference>
<dbReference type="EMBL" id="BC028170">
    <property type="protein sequence ID" value="AAH28170.1"/>
    <property type="molecule type" value="mRNA"/>
</dbReference>
<dbReference type="CCDS" id="CCDS9353.1"/>
<dbReference type="PIR" id="G02221">
    <property type="entry name" value="G02221"/>
</dbReference>
<dbReference type="RefSeq" id="NP_005575.1">
    <property type="nucleotide sequence ID" value="NM_005584.5"/>
</dbReference>
<dbReference type="PDB" id="5EOG">
    <property type="method" value="X-ray"/>
    <property type="resolution" value="3.05 A"/>
    <property type="chains" value="A/B/C/D/F=2-359"/>
</dbReference>
<dbReference type="PDB" id="5EOM">
    <property type="method" value="X-ray"/>
    <property type="resolution" value="2.55 A"/>
    <property type="chains" value="A/B/C/D/E/F/G/H/I/J=2-359"/>
</dbReference>
<dbReference type="PDBsum" id="5EOG"/>
<dbReference type="PDBsum" id="5EOM"/>
<dbReference type="SMR" id="Q13394"/>
<dbReference type="BioGRID" id="110256">
    <property type="interactions" value="13"/>
</dbReference>
<dbReference type="FunCoup" id="Q13394">
    <property type="interactions" value="60"/>
</dbReference>
<dbReference type="IntAct" id="Q13394">
    <property type="interactions" value="12"/>
</dbReference>
<dbReference type="STRING" id="9606.ENSP00000369251"/>
<dbReference type="GlyGen" id="Q13394">
    <property type="glycosylation" value="2 sites, 1 O-linked glycan (2 sites)"/>
</dbReference>
<dbReference type="iPTMnet" id="Q13394"/>
<dbReference type="PhosphoSitePlus" id="Q13394"/>
<dbReference type="BioMuta" id="MAB21L1"/>
<dbReference type="DMDM" id="74739786"/>
<dbReference type="MassIVE" id="Q13394"/>
<dbReference type="PaxDb" id="9606-ENSP00000369251"/>
<dbReference type="PeptideAtlas" id="Q13394"/>
<dbReference type="ProteomicsDB" id="59364"/>
<dbReference type="TopDownProteomics" id="Q13394"/>
<dbReference type="Antibodypedia" id="23045">
    <property type="antibodies" value="60 antibodies from 16 providers"/>
</dbReference>
<dbReference type="DNASU" id="4081"/>
<dbReference type="Ensembl" id="ENST00000379919.6">
    <property type="protein sequence ID" value="ENSP00000369251.4"/>
    <property type="gene ID" value="ENSG00000180660.9"/>
</dbReference>
<dbReference type="Ensembl" id="ENST00000707125.1">
    <property type="protein sequence ID" value="ENSP00000516753.1"/>
    <property type="gene ID" value="ENSG00000180660.9"/>
</dbReference>
<dbReference type="GeneID" id="4081"/>
<dbReference type="KEGG" id="hsa:4081"/>
<dbReference type="MANE-Select" id="ENST00000379919.6">
    <property type="protein sequence ID" value="ENSP00000369251.4"/>
    <property type="RefSeq nucleotide sequence ID" value="NM_005584.5"/>
    <property type="RefSeq protein sequence ID" value="NP_005575.1"/>
</dbReference>
<dbReference type="UCSC" id="uc032aca.2">
    <property type="organism name" value="human"/>
</dbReference>
<dbReference type="AGR" id="HGNC:6757"/>
<dbReference type="CTD" id="4081"/>
<dbReference type="DisGeNET" id="4081"/>
<dbReference type="GeneCards" id="MAB21L1"/>
<dbReference type="HGNC" id="HGNC:6757">
    <property type="gene designation" value="MAB21L1"/>
</dbReference>
<dbReference type="HPA" id="ENSG00000180660">
    <property type="expression patterns" value="Group enriched (brain, retina)"/>
</dbReference>
<dbReference type="MalaCards" id="MAB21L1"/>
<dbReference type="MIM" id="601280">
    <property type="type" value="gene"/>
</dbReference>
<dbReference type="MIM" id="618479">
    <property type="type" value="phenotype"/>
</dbReference>
<dbReference type="neXtProt" id="NX_Q13394"/>
<dbReference type="OpenTargets" id="ENSG00000180660"/>
<dbReference type="Orphanet" id="495875">
    <property type="disease" value="Congenital labioscrotal agenesis-cerebellar malformation-corneal dystrophy-facial dysmorphism syndrome"/>
</dbReference>
<dbReference type="PharmGKB" id="PA30516"/>
<dbReference type="VEuPathDB" id="HostDB:ENSG00000180660"/>
<dbReference type="eggNOG" id="KOG3963">
    <property type="taxonomic scope" value="Eukaryota"/>
</dbReference>
<dbReference type="GeneTree" id="ENSGT01050000244827"/>
<dbReference type="HOGENOM" id="CLU_045315_0_0_1"/>
<dbReference type="InParanoid" id="Q13394"/>
<dbReference type="OMA" id="RESIYMK"/>
<dbReference type="OrthoDB" id="5961151at2759"/>
<dbReference type="PAN-GO" id="Q13394">
    <property type="GO annotations" value="0 GO annotations based on evolutionary models"/>
</dbReference>
<dbReference type="PhylomeDB" id="Q13394"/>
<dbReference type="TreeFam" id="TF315012"/>
<dbReference type="PathwayCommons" id="Q13394"/>
<dbReference type="SignaLink" id="Q13394"/>
<dbReference type="BioGRID-ORCS" id="4081">
    <property type="hits" value="17 hits in 1149 CRISPR screens"/>
</dbReference>
<dbReference type="ChiTaRS" id="MAB21L1">
    <property type="organism name" value="human"/>
</dbReference>
<dbReference type="GenomeRNAi" id="4081"/>
<dbReference type="Pharos" id="Q13394">
    <property type="development level" value="Tbio"/>
</dbReference>
<dbReference type="PRO" id="PR:Q13394"/>
<dbReference type="Proteomes" id="UP000005640">
    <property type="component" value="Chromosome 13"/>
</dbReference>
<dbReference type="RNAct" id="Q13394">
    <property type="molecule type" value="protein"/>
</dbReference>
<dbReference type="Bgee" id="ENSG00000180660">
    <property type="expression patterns" value="Expressed in pigmented layer of retina and 107 other cell types or tissues"/>
</dbReference>
<dbReference type="ExpressionAtlas" id="Q13394">
    <property type="expression patterns" value="baseline and differential"/>
</dbReference>
<dbReference type="GO" id="GO:0005634">
    <property type="term" value="C:nucleus"/>
    <property type="evidence" value="ECO:0007669"/>
    <property type="project" value="UniProtKB-SubCell"/>
</dbReference>
<dbReference type="GO" id="GO:0005524">
    <property type="term" value="F:ATP binding"/>
    <property type="evidence" value="ECO:0007669"/>
    <property type="project" value="UniProtKB-KW"/>
</dbReference>
<dbReference type="GO" id="GO:0005525">
    <property type="term" value="F:GTP binding"/>
    <property type="evidence" value="ECO:0007669"/>
    <property type="project" value="UniProtKB-KW"/>
</dbReference>
<dbReference type="GO" id="GO:0046872">
    <property type="term" value="F:metal ion binding"/>
    <property type="evidence" value="ECO:0007669"/>
    <property type="project" value="UniProtKB-KW"/>
</dbReference>
<dbReference type="GO" id="GO:0016779">
    <property type="term" value="F:nucleotidyltransferase activity"/>
    <property type="evidence" value="ECO:0007669"/>
    <property type="project" value="UniProtKB-KW"/>
</dbReference>
<dbReference type="GO" id="GO:0009653">
    <property type="term" value="P:anatomical structure morphogenesis"/>
    <property type="evidence" value="ECO:0000304"/>
    <property type="project" value="ProtInc"/>
</dbReference>
<dbReference type="GO" id="GO:0043010">
    <property type="term" value="P:camera-type eye development"/>
    <property type="evidence" value="ECO:0007669"/>
    <property type="project" value="Ensembl"/>
</dbReference>
<dbReference type="GO" id="GO:0008283">
    <property type="term" value="P:cell population proliferation"/>
    <property type="evidence" value="ECO:0007669"/>
    <property type="project" value="Ensembl"/>
</dbReference>
<dbReference type="GO" id="GO:0001654">
    <property type="term" value="P:eye development"/>
    <property type="evidence" value="ECO:0000315"/>
    <property type="project" value="UniProtKB"/>
</dbReference>
<dbReference type="GO" id="GO:0008284">
    <property type="term" value="P:positive regulation of cell population proliferation"/>
    <property type="evidence" value="ECO:0007669"/>
    <property type="project" value="Ensembl"/>
</dbReference>
<dbReference type="FunFam" id="1.10.1410.40:FF:000002">
    <property type="entry name" value="protein mab-21-like 1"/>
    <property type="match status" value="1"/>
</dbReference>
<dbReference type="FunFam" id="3.30.460.90:FF:000001">
    <property type="entry name" value="protein mab-21-like 2"/>
    <property type="match status" value="1"/>
</dbReference>
<dbReference type="Gene3D" id="1.10.1410.40">
    <property type="match status" value="1"/>
</dbReference>
<dbReference type="Gene3D" id="3.30.460.90">
    <property type="match status" value="1"/>
</dbReference>
<dbReference type="InterPro" id="IPR046903">
    <property type="entry name" value="Mab-21-like_nuc_Trfase"/>
</dbReference>
<dbReference type="InterPro" id="IPR046906">
    <property type="entry name" value="Mab-21_HhH/H2TH-like"/>
</dbReference>
<dbReference type="InterPro" id="IPR024810">
    <property type="entry name" value="MAB21L/cGLR"/>
</dbReference>
<dbReference type="PANTHER" id="PTHR10656">
    <property type="entry name" value="CELL FATE DETERMINING PROTEIN MAB21-RELATED"/>
    <property type="match status" value="1"/>
</dbReference>
<dbReference type="PANTHER" id="PTHR10656:SF38">
    <property type="entry name" value="NUCLEOTIDYLTRANSFERASE MAB21L1-RELATED"/>
    <property type="match status" value="1"/>
</dbReference>
<dbReference type="Pfam" id="PF03281">
    <property type="entry name" value="Mab-21"/>
    <property type="match status" value="1"/>
</dbReference>
<dbReference type="Pfam" id="PF20266">
    <property type="entry name" value="Mab-21_C"/>
    <property type="match status" value="1"/>
</dbReference>
<dbReference type="SMART" id="SM01265">
    <property type="entry name" value="Mab-21"/>
    <property type="match status" value="1"/>
</dbReference>
<keyword id="KW-0002">3D-structure</keyword>
<keyword id="KW-0067">ATP-binding</keyword>
<keyword id="KW-0217">Developmental protein</keyword>
<keyword id="KW-0225">Disease variant</keyword>
<keyword id="KW-0342">GTP-binding</keyword>
<keyword id="KW-0991">Intellectual disability</keyword>
<keyword id="KW-0460">Magnesium</keyword>
<keyword id="KW-0479">Metal-binding</keyword>
<keyword id="KW-0547">Nucleotide-binding</keyword>
<keyword id="KW-0548">Nucleotidyltransferase</keyword>
<keyword id="KW-0539">Nucleus</keyword>
<keyword id="KW-1267">Proteomics identification</keyword>
<keyword id="KW-1185">Reference proteome</keyword>
<keyword id="KW-0808">Transferase</keyword>
<protein>
    <recommendedName>
        <fullName evidence="12">Putative nucleotidyltransferase MAB21L1</fullName>
        <ecNumber evidence="12">2.7.7.-</ecNumber>
    </recommendedName>
    <alternativeName>
        <fullName evidence="14">Protein mab-21-like 1</fullName>
    </alternativeName>
</protein>
<reference key="1">
    <citation type="journal article" date="1996" name="Hum. Mol. Genet.">
        <title>cDNA cloning of a human homologue of the Caenorhabditis elegans cell fate-determining gene mab-21: expression, chromosomal localization and analysis of a highly polymorphic (CAG)n trinucleotide repeat.</title>
        <authorList>
            <person name="Margolis R.L."/>
            <person name="Stine Q.C."/>
            <person name="Mcinnis M.G."/>
            <person name="Ranen N.G."/>
            <person name="Rubinsztein D.C."/>
            <person name="Leggo J."/>
            <person name="Jones Brando L.V."/>
            <person name="Kidwai A.S."/>
            <person name="Loev S.J."/>
            <person name="Breschel T.S."/>
            <person name="Callahan C."/>
            <person name="Simpson S.G."/>
            <person name="DePaulo J.R."/>
            <person name="McMahon F.J."/>
            <person name="Jain S."/>
            <person name="Paykel E.S."/>
            <person name="Walsh C."/>
            <person name="DeLisi L.E."/>
            <person name="Crow T.J."/>
            <person name="Torrey E.F."/>
            <person name="Ashworth R.G."/>
            <person name="Macke J.P."/>
            <person name="Nathans J."/>
            <person name="Ross C.A."/>
        </authorList>
    </citation>
    <scope>NUCLEOTIDE SEQUENCE [MRNA]</scope>
    <scope>TISSUE SPECIFICITY</scope>
    <scope>POLYMORPHISM</scope>
</reference>
<reference key="2">
    <citation type="journal article" date="2003" name="Cancer Lett.">
        <title>Neuroblastoma oligo-capping cDNA project: toward the understanding of the genesis and biology of neuroblastoma.</title>
        <authorList>
            <person name="Ohira M."/>
            <person name="Morohashi A."/>
            <person name="Nakamura Y."/>
            <person name="Isogai E."/>
            <person name="Furuya K."/>
            <person name="Hamano S."/>
            <person name="Machida T."/>
            <person name="Aoyama M."/>
            <person name="Fukumura M."/>
            <person name="Miyazaki K."/>
            <person name="Suzuki Y."/>
            <person name="Sugano S."/>
            <person name="Hirato J."/>
            <person name="Nakagawara A."/>
        </authorList>
    </citation>
    <scope>NUCLEOTIDE SEQUENCE [LARGE SCALE MRNA]</scope>
    <source>
        <tissue>Neuroblastoma</tissue>
    </source>
</reference>
<reference key="3">
    <citation type="submission" date="2004-06" db="EMBL/GenBank/DDBJ databases">
        <title>Cloning of human full open reading frames in Gateway(TM) system entry vector (pDONR201).</title>
        <authorList>
            <person name="Ebert L."/>
            <person name="Schick M."/>
            <person name="Neubert P."/>
            <person name="Schatten R."/>
            <person name="Henze S."/>
            <person name="Korn B."/>
        </authorList>
    </citation>
    <scope>NUCLEOTIDE SEQUENCE [LARGE SCALE MRNA]</scope>
</reference>
<reference key="4">
    <citation type="journal article" date="2004" name="Nature">
        <title>The DNA sequence and analysis of human chromosome 13.</title>
        <authorList>
            <person name="Dunham A."/>
            <person name="Matthews L.H."/>
            <person name="Burton J."/>
            <person name="Ashurst J.L."/>
            <person name="Howe K.L."/>
            <person name="Ashcroft K.J."/>
            <person name="Beare D.M."/>
            <person name="Burford D.C."/>
            <person name="Hunt S.E."/>
            <person name="Griffiths-Jones S."/>
            <person name="Jones M.C."/>
            <person name="Keenan S.J."/>
            <person name="Oliver K."/>
            <person name="Scott C.E."/>
            <person name="Ainscough R."/>
            <person name="Almeida J.P."/>
            <person name="Ambrose K.D."/>
            <person name="Andrews D.T."/>
            <person name="Ashwell R.I.S."/>
            <person name="Babbage A.K."/>
            <person name="Bagguley C.L."/>
            <person name="Bailey J."/>
            <person name="Bannerjee R."/>
            <person name="Barlow K.F."/>
            <person name="Bates K."/>
            <person name="Beasley H."/>
            <person name="Bird C.P."/>
            <person name="Bray-Allen S."/>
            <person name="Brown A.J."/>
            <person name="Brown J.Y."/>
            <person name="Burrill W."/>
            <person name="Carder C."/>
            <person name="Carter N.P."/>
            <person name="Chapman J.C."/>
            <person name="Clamp M.E."/>
            <person name="Clark S.Y."/>
            <person name="Clarke G."/>
            <person name="Clee C.M."/>
            <person name="Clegg S.C."/>
            <person name="Cobley V."/>
            <person name="Collins J.E."/>
            <person name="Corby N."/>
            <person name="Coville G.J."/>
            <person name="Deloukas P."/>
            <person name="Dhami P."/>
            <person name="Dunham I."/>
            <person name="Dunn M."/>
            <person name="Earthrowl M.E."/>
            <person name="Ellington A.G."/>
            <person name="Faulkner L."/>
            <person name="Frankish A.G."/>
            <person name="Frankland J."/>
            <person name="French L."/>
            <person name="Garner P."/>
            <person name="Garnett J."/>
            <person name="Gilbert J.G.R."/>
            <person name="Gilson C.J."/>
            <person name="Ghori J."/>
            <person name="Grafham D.V."/>
            <person name="Gribble S.M."/>
            <person name="Griffiths C."/>
            <person name="Hall R.E."/>
            <person name="Hammond S."/>
            <person name="Harley J.L."/>
            <person name="Hart E.A."/>
            <person name="Heath P.D."/>
            <person name="Howden P.J."/>
            <person name="Huckle E.J."/>
            <person name="Hunt P.J."/>
            <person name="Hunt A.R."/>
            <person name="Johnson C."/>
            <person name="Johnson D."/>
            <person name="Kay M."/>
            <person name="Kimberley A.M."/>
            <person name="King A."/>
            <person name="Laird G.K."/>
            <person name="Langford C.J."/>
            <person name="Lawlor S."/>
            <person name="Leongamornlert D.A."/>
            <person name="Lloyd D.M."/>
            <person name="Lloyd C."/>
            <person name="Loveland J.E."/>
            <person name="Lovell J."/>
            <person name="Martin S."/>
            <person name="Mashreghi-Mohammadi M."/>
            <person name="McLaren S.J."/>
            <person name="McMurray A."/>
            <person name="Milne S."/>
            <person name="Moore M.J.F."/>
            <person name="Nickerson T."/>
            <person name="Palmer S.A."/>
            <person name="Pearce A.V."/>
            <person name="Peck A.I."/>
            <person name="Pelan S."/>
            <person name="Phillimore B."/>
            <person name="Porter K.M."/>
            <person name="Rice C.M."/>
            <person name="Searle S."/>
            <person name="Sehra H.K."/>
            <person name="Shownkeen R."/>
            <person name="Skuce C.D."/>
            <person name="Smith M."/>
            <person name="Steward C.A."/>
            <person name="Sycamore N."/>
            <person name="Tester J."/>
            <person name="Thomas D.W."/>
            <person name="Tracey A."/>
            <person name="Tromans A."/>
            <person name="Tubby B."/>
            <person name="Wall M."/>
            <person name="Wallis J.M."/>
            <person name="West A.P."/>
            <person name="Whitehead S.L."/>
            <person name="Willey D.L."/>
            <person name="Wilming L."/>
            <person name="Wray P.W."/>
            <person name="Wright M.W."/>
            <person name="Young L."/>
            <person name="Coulson A."/>
            <person name="Durbin R.M."/>
            <person name="Hubbard T."/>
            <person name="Sulston J.E."/>
            <person name="Beck S."/>
            <person name="Bentley D.R."/>
            <person name="Rogers J."/>
            <person name="Ross M.T."/>
        </authorList>
    </citation>
    <scope>NUCLEOTIDE SEQUENCE [LARGE SCALE GENOMIC DNA]</scope>
</reference>
<reference key="5">
    <citation type="submission" date="2005-07" db="EMBL/GenBank/DDBJ databases">
        <authorList>
            <person name="Mural R.J."/>
            <person name="Istrail S."/>
            <person name="Sutton G.G."/>
            <person name="Florea L."/>
            <person name="Halpern A.L."/>
            <person name="Mobarry C.M."/>
            <person name="Lippert R."/>
            <person name="Walenz B."/>
            <person name="Shatkay H."/>
            <person name="Dew I."/>
            <person name="Miller J.R."/>
            <person name="Flanigan M.J."/>
            <person name="Edwards N.J."/>
            <person name="Bolanos R."/>
            <person name="Fasulo D."/>
            <person name="Halldorsson B.V."/>
            <person name="Hannenhalli S."/>
            <person name="Turner R."/>
            <person name="Yooseph S."/>
            <person name="Lu F."/>
            <person name="Nusskern D.R."/>
            <person name="Shue B.C."/>
            <person name="Zheng X.H."/>
            <person name="Zhong F."/>
            <person name="Delcher A.L."/>
            <person name="Huson D.H."/>
            <person name="Kravitz S.A."/>
            <person name="Mouchard L."/>
            <person name="Reinert K."/>
            <person name="Remington K.A."/>
            <person name="Clark A.G."/>
            <person name="Waterman M.S."/>
            <person name="Eichler E.E."/>
            <person name="Adams M.D."/>
            <person name="Hunkapiller M.W."/>
            <person name="Myers E.W."/>
            <person name="Venter J.C."/>
        </authorList>
    </citation>
    <scope>NUCLEOTIDE SEQUENCE [LARGE SCALE GENOMIC DNA]</scope>
</reference>
<reference key="6">
    <citation type="journal article" date="2004" name="Genome Res.">
        <title>The status, quality, and expansion of the NIH full-length cDNA project: the Mammalian Gene Collection (MGC).</title>
        <authorList>
            <consortium name="The MGC Project Team"/>
        </authorList>
    </citation>
    <scope>NUCLEOTIDE SEQUENCE [LARGE SCALE MRNA]</scope>
    <source>
        <tissue>Brain</tissue>
    </source>
</reference>
<reference key="7">
    <citation type="journal article" date="1997" name="J. Med. Genet.">
        <title>Meiotic instability associated with the CAGR1 trinucleotide repeat at 13q13.</title>
        <authorList>
            <person name="Potter N.T."/>
        </authorList>
    </citation>
    <scope>POLYMORPHISM</scope>
</reference>
<reference key="8">
    <citation type="journal article" date="1999" name="J. Med. Genet.">
        <title>Unstable expansion of the CAG trinucleotide repeat in MAB21L1: report of a second pedigree and effect on protein expression.</title>
        <authorList>
            <person name="Margolis R.L."/>
            <person name="Stine O.C."/>
            <person name="Ward C.M."/>
            <person name="Franz M.L."/>
            <person name="Rosenblatt A."/>
            <person name="Callahan C."/>
            <person name="Sherr M."/>
            <person name="Ross C.A."/>
            <person name="Potter N.T."/>
        </authorList>
    </citation>
    <scope>POLYMORPHISM</scope>
</reference>
<reference key="9">
    <citation type="journal article" date="2004" name="Birth Defects Res. A Clin. Mol. Teratol.">
        <title>Molecular genetic analysis of human homologs of Caenorhabditis elegans mab-21-like 1 gene in patients with neural tube defects.</title>
        <authorList>
            <person name="Merello E."/>
            <person name="De Marco P."/>
            <person name="Moroni A."/>
            <person name="Raso A."/>
            <person name="Calevo M.G."/>
            <person name="Consalez G.G."/>
            <person name="Cama A."/>
            <person name="Capra V."/>
        </authorList>
    </citation>
    <scope>POLYMORPHISM</scope>
</reference>
<reference evidence="15 16" key="10">
    <citation type="journal article" date="2016" name="Sci. Rep.">
        <title>Structural and biochemical characterization of the cell fate determining nucleotidyltransferase fold protein MAB21L1.</title>
        <authorList>
            <person name="de Oliveira Mann C.C."/>
            <person name="Kiefersauer R."/>
            <person name="Witte G."/>
            <person name="Hopfner K.P."/>
        </authorList>
    </citation>
    <scope>X-RAY CRYSTALLOGRAPHY (2.55 ANGSTROMS) OF 2-359 IN COMPLEX WITH CTP</scope>
    <scope>FUNCTION</scope>
    <scope>SUBUNIT</scope>
    <scope>DOMAIN</scope>
    <scope>MUTAGENESIS OF ARG-51 AND ARG-247</scope>
</reference>
<reference key="11">
    <citation type="journal article" date="2017" name="Clin. Genet.">
        <title>Autosomal recessive truncating MAB21L1 mutation associated with a syndromic scrotal agenesis.</title>
        <authorList>
            <person name="Bruel A.L."/>
            <person name="Masurel-Paulet A."/>
            <person name="Riviere J.B."/>
            <person name="Duffourd Y."/>
            <person name="Lehalle D."/>
            <person name="Bensignor C."/>
            <person name="Huet F."/>
            <person name="Borgnon J."/>
            <person name="Roucher F."/>
            <person name="Kuentz P."/>
            <person name="Deleuze J.F."/>
            <person name="Thauvin-Robinet C."/>
            <person name="Faivre L."/>
            <person name="Thevenon J."/>
        </authorList>
    </citation>
    <scope>INVOLVEMENT IN COFG</scope>
    <scope>FUNCTION</scope>
</reference>
<reference key="12">
    <citation type="journal article" date="2019" name="J. Med. Genet.">
        <title>MAB21L1 loss of function causes a syndromic neurodevelopmental disorder with distinctive cerebellar, ocular, craniofacial and genital features (COFG syndrome).</title>
        <authorList>
            <person name="Rad A."/>
            <person name="Altunoglu U."/>
            <person name="Miller R."/>
            <person name="Maroofian R."/>
            <person name="James K.N."/>
            <person name="Caglayan A.O."/>
            <person name="Najafi M."/>
            <person name="Stanley V."/>
            <person name="Boustany R.M."/>
            <person name="Yesil G."/>
            <person name="Sahebzamani A."/>
            <person name="Ercan-Sencicek G."/>
            <person name="Saeidi K."/>
            <person name="Wu K."/>
            <person name="Bauer P."/>
            <person name="Bakey Z."/>
            <person name="Gleeson J.G."/>
            <person name="Hauser N."/>
            <person name="Gunel M."/>
            <person name="Kayserili H."/>
            <person name="Schmidts M."/>
        </authorList>
    </citation>
    <scope>INVOLVEMENT IN COFG</scope>
    <scope>FUNCTION</scope>
    <scope>VARIANTS COFG PRO-233 AND 280-TYR--LEU-359 DEL</scope>
</reference>
<comment type="function">
    <text evidence="4 5 6">Putative nucleotidyltransferase required for several aspects of embryonic development including normal development of the eye (PubMed:27103078, PubMed:30487245). It is unclear whether it displays nucleotidyltransferase activity in vivo (PubMed:27271801). Binds single-stranded RNA (ssRNA) (PubMed:27271801).</text>
</comment>
<comment type="subunit">
    <text evidence="13">Monomer (PubMed:27271801). Homodecamer; composed of 2 back to back homopentamers (PubMed:27271801). The protein may exist as monomer in solution and oiligomerizes upon ligand binding (PubMed:27271801).</text>
</comment>
<comment type="interaction">
    <interactant intactId="EBI-10229059">
        <id>Q13394</id>
    </interactant>
    <interactant intactId="EBI-348489">
        <id>P40425</id>
        <label>PBX2</label>
    </interactant>
    <organismsDiffer>false</organismsDiffer>
    <experiments>3</experiments>
</comment>
<comment type="interaction">
    <interactant intactId="EBI-10229059">
        <id>Q13394</id>
    </interactant>
    <interactant intactId="EBI-747107">
        <id>Q8IUQ4</id>
        <label>SIAH1</label>
    </interactant>
    <organismsDiffer>false</organismsDiffer>
    <experiments>3</experiments>
</comment>
<comment type="subcellular location">
    <subcellularLocation>
        <location evidence="1">Nucleus</location>
    </subcellularLocation>
</comment>
<comment type="tissue specificity">
    <text evidence="7">Expressed in brain, cerebellum and skeletal muscle.</text>
</comment>
<comment type="domain">
    <text evidence="5">While it shares structure similarities with CGAS, it also features a number of differences. The crystal structure is in inactive conformation and the enzyme would require a conformational change to be active. The nucleotidyltransferase activity is therefore unclear.</text>
</comment>
<comment type="polymorphism">
    <text evidence="3 7 8 9">A CAG trinucleotide repeat occurs in the 5'-UTR of this gene. This repeat has been found to be highly polymorphic, although expanded alleles have not yet been definitely linked with any phenotypic abnormality.</text>
</comment>
<comment type="disease" evidence="4 6">
    <disease id="DI-05597">
        <name>Cerebellar, ocular, craniofacial, and genital syndrome</name>
        <acronym>COFG</acronym>
        <description>An autosomal recessive syndrome characterized by moderate to severe developmental delay, intellectual disability, cerebellar hypoplasia with ataxia, variable microcephaly, ophthalmological anomalies, facial dysmorphism, absent or underdeveloped nipples, underdeveloped labioscrotal folds and scrotal agenesis.</description>
        <dbReference type="MIM" id="618479"/>
    </disease>
    <text>The disease is caused by variants affecting the gene represented in this entry.</text>
</comment>
<comment type="similarity">
    <text evidence="12">Belongs to the mab-21 family.</text>
</comment>
<sequence>MIAAQAKLVYHLNKYYNEKCQARKAAIAKTIREVCKVVSDVLKEVEVQEPRFISSLNEMDNRYEGLEVISPTEFEVVLYLNQMGVFNFVDDGSLPGCAVLKLSDGRKRSMSLWVEFITASGYLSARKIRSRFQTLVAQAVDKCSYRDVVKMVADTSEVKLRIRDRYVVQITPAFKCTGIWPRSAAHWPLPHIPWPGPNRVAEVKAEGFNLLSKECHSLAGKQSSAESDAWVLQFAEAENRLQMGGCRKKCLSILKTLRDRHLELPGQPLNNYHMKTLVSYECEKHPRESDWDESCLGDRLNGILLQLISCLQCRRCPHYFLPNLDLFQGKPHSALENAAKQTWRLAREILTNPKSLEKL</sequence>
<evidence type="ECO:0000250" key="1">
    <source>
        <dbReference type="UniProtKB" id="O70299"/>
    </source>
</evidence>
<evidence type="ECO:0000250" key="2">
    <source>
        <dbReference type="UniProtKB" id="Q8N884"/>
    </source>
</evidence>
<evidence type="ECO:0000269" key="3">
    <source>
    </source>
</evidence>
<evidence type="ECO:0000269" key="4">
    <source>
    </source>
</evidence>
<evidence type="ECO:0000269" key="5">
    <source>
    </source>
</evidence>
<evidence type="ECO:0000269" key="6">
    <source>
    </source>
</evidence>
<evidence type="ECO:0000269" key="7">
    <source>
    </source>
</evidence>
<evidence type="ECO:0000269" key="8">
    <source>
    </source>
</evidence>
<evidence type="ECO:0000269" key="9">
    <source>
    </source>
</evidence>
<evidence type="ECO:0000303" key="10">
    <source>
    </source>
</evidence>
<evidence type="ECO:0000303" key="11">
    <source>
    </source>
</evidence>
<evidence type="ECO:0000305" key="12"/>
<evidence type="ECO:0000305" key="13">
    <source>
    </source>
</evidence>
<evidence type="ECO:0000312" key="14">
    <source>
        <dbReference type="HGNC" id="HGNC:6757"/>
    </source>
</evidence>
<evidence type="ECO:0007744" key="15">
    <source>
        <dbReference type="PDB" id="5EOG"/>
    </source>
</evidence>
<evidence type="ECO:0007744" key="16">
    <source>
        <dbReference type="PDB" id="5EOM"/>
    </source>
</evidence>
<evidence type="ECO:0007829" key="17">
    <source>
        <dbReference type="PDB" id="5EOM"/>
    </source>
</evidence>
<name>MB211_HUMAN</name>
<organism>
    <name type="scientific">Homo sapiens</name>
    <name type="common">Human</name>
    <dbReference type="NCBI Taxonomy" id="9606"/>
    <lineage>
        <taxon>Eukaryota</taxon>
        <taxon>Metazoa</taxon>
        <taxon>Chordata</taxon>
        <taxon>Craniata</taxon>
        <taxon>Vertebrata</taxon>
        <taxon>Euteleostomi</taxon>
        <taxon>Mammalia</taxon>
        <taxon>Eutheria</taxon>
        <taxon>Euarchontoglires</taxon>
        <taxon>Primates</taxon>
        <taxon>Haplorrhini</taxon>
        <taxon>Catarrhini</taxon>
        <taxon>Hominidae</taxon>
        <taxon>Homo</taxon>
    </lineage>
</organism>
<gene>
    <name evidence="14" type="primary">MAB21L1</name>
    <name evidence="11" type="synonym">CAGR1</name>
    <name evidence="10" type="ORF">Nbla00126</name>
</gene>
<accession>Q13394</accession>
<accession>Q6I9T5</accession>